<feature type="chain" id="PRO_0000173732" description="Agmatinase">
    <location>
        <begin position="1"/>
        <end position="306"/>
    </location>
</feature>
<feature type="binding site" evidence="1">
    <location>
        <position position="126"/>
    </location>
    <ligand>
        <name>Mn(2+)</name>
        <dbReference type="ChEBI" id="CHEBI:29035"/>
    </ligand>
</feature>
<feature type="binding site" evidence="1">
    <location>
        <position position="149"/>
    </location>
    <ligand>
        <name>Mn(2+)</name>
        <dbReference type="ChEBI" id="CHEBI:29035"/>
    </ligand>
</feature>
<feature type="binding site" evidence="1">
    <location>
        <position position="151"/>
    </location>
    <ligand>
        <name>Mn(2+)</name>
        <dbReference type="ChEBI" id="CHEBI:29035"/>
    </ligand>
</feature>
<feature type="binding site" evidence="1">
    <location>
        <position position="153"/>
    </location>
    <ligand>
        <name>Mn(2+)</name>
        <dbReference type="ChEBI" id="CHEBI:29035"/>
    </ligand>
</feature>
<feature type="binding site" evidence="1">
    <location>
        <position position="230"/>
    </location>
    <ligand>
        <name>Mn(2+)</name>
        <dbReference type="ChEBI" id="CHEBI:29035"/>
    </ligand>
</feature>
<feature type="binding site" evidence="1">
    <location>
        <position position="232"/>
    </location>
    <ligand>
        <name>Mn(2+)</name>
        <dbReference type="ChEBI" id="CHEBI:29035"/>
    </ligand>
</feature>
<reference key="1">
    <citation type="journal article" date="2001" name="Nature">
        <title>Genome sequence of enterohaemorrhagic Escherichia coli O157:H7.</title>
        <authorList>
            <person name="Perna N.T."/>
            <person name="Plunkett G. III"/>
            <person name="Burland V."/>
            <person name="Mau B."/>
            <person name="Glasner J.D."/>
            <person name="Rose D.J."/>
            <person name="Mayhew G.F."/>
            <person name="Evans P.S."/>
            <person name="Gregor J."/>
            <person name="Kirkpatrick H.A."/>
            <person name="Posfai G."/>
            <person name="Hackett J."/>
            <person name="Klink S."/>
            <person name="Boutin A."/>
            <person name="Shao Y."/>
            <person name="Miller L."/>
            <person name="Grotbeck E.J."/>
            <person name="Davis N.W."/>
            <person name="Lim A."/>
            <person name="Dimalanta E.T."/>
            <person name="Potamousis K."/>
            <person name="Apodaca J."/>
            <person name="Anantharaman T.S."/>
            <person name="Lin J."/>
            <person name="Yen G."/>
            <person name="Schwartz D.C."/>
            <person name="Welch R.A."/>
            <person name="Blattner F.R."/>
        </authorList>
    </citation>
    <scope>NUCLEOTIDE SEQUENCE [LARGE SCALE GENOMIC DNA]</scope>
    <source>
        <strain>O157:H7 / EDL933 / ATCC 700927 / EHEC</strain>
    </source>
</reference>
<reference key="2">
    <citation type="journal article" date="2001" name="DNA Res.">
        <title>Complete genome sequence of enterohemorrhagic Escherichia coli O157:H7 and genomic comparison with a laboratory strain K-12.</title>
        <authorList>
            <person name="Hayashi T."/>
            <person name="Makino K."/>
            <person name="Ohnishi M."/>
            <person name="Kurokawa K."/>
            <person name="Ishii K."/>
            <person name="Yokoyama K."/>
            <person name="Han C.-G."/>
            <person name="Ohtsubo E."/>
            <person name="Nakayama K."/>
            <person name="Murata T."/>
            <person name="Tanaka M."/>
            <person name="Tobe T."/>
            <person name="Iida T."/>
            <person name="Takami H."/>
            <person name="Honda T."/>
            <person name="Sasakawa C."/>
            <person name="Ogasawara N."/>
            <person name="Yasunaga T."/>
            <person name="Kuhara S."/>
            <person name="Shiba T."/>
            <person name="Hattori M."/>
            <person name="Shinagawa H."/>
        </authorList>
    </citation>
    <scope>NUCLEOTIDE SEQUENCE [LARGE SCALE GENOMIC DNA]</scope>
    <source>
        <strain>O157:H7 / Sakai / RIMD 0509952 / EHEC</strain>
    </source>
</reference>
<protein>
    <recommendedName>
        <fullName evidence="1">Agmatinase</fullName>
        <ecNumber evidence="1">3.5.3.11</ecNumber>
    </recommendedName>
    <alternativeName>
        <fullName evidence="1">Agmatine ureohydrolase</fullName>
        <shortName evidence="1">AUH</shortName>
    </alternativeName>
</protein>
<accession>P60652</accession>
<accession>P16936</accession>
<dbReference type="EC" id="3.5.3.11" evidence="1"/>
<dbReference type="EMBL" id="AE005174">
    <property type="protein sequence ID" value="AAG58067.1"/>
    <property type="molecule type" value="Genomic_DNA"/>
</dbReference>
<dbReference type="EMBL" id="BA000007">
    <property type="protein sequence ID" value="BAB37235.1"/>
    <property type="molecule type" value="Genomic_DNA"/>
</dbReference>
<dbReference type="PIR" id="D91105">
    <property type="entry name" value="D91105"/>
</dbReference>
<dbReference type="RefSeq" id="NP_311839.1">
    <property type="nucleotide sequence ID" value="NC_002695.1"/>
</dbReference>
<dbReference type="RefSeq" id="WP_000105566.1">
    <property type="nucleotide sequence ID" value="NZ_VOAI01000003.1"/>
</dbReference>
<dbReference type="SMR" id="P60652"/>
<dbReference type="STRING" id="155864.Z4281"/>
<dbReference type="GeneID" id="89517749"/>
<dbReference type="GeneID" id="916365"/>
<dbReference type="KEGG" id="ece:Z4281"/>
<dbReference type="KEGG" id="ecs:ECs_3812"/>
<dbReference type="PATRIC" id="fig|386585.9.peg.3979"/>
<dbReference type="eggNOG" id="COG0010">
    <property type="taxonomic scope" value="Bacteria"/>
</dbReference>
<dbReference type="HOGENOM" id="CLU_039478_0_0_6"/>
<dbReference type="OMA" id="YELTTIM"/>
<dbReference type="UniPathway" id="UPA00534">
    <property type="reaction ID" value="UER00287"/>
</dbReference>
<dbReference type="Proteomes" id="UP000000558">
    <property type="component" value="Chromosome"/>
</dbReference>
<dbReference type="Proteomes" id="UP000002519">
    <property type="component" value="Chromosome"/>
</dbReference>
<dbReference type="GO" id="GO:0008783">
    <property type="term" value="F:agmatinase activity"/>
    <property type="evidence" value="ECO:0007669"/>
    <property type="project" value="UniProtKB-UniRule"/>
</dbReference>
<dbReference type="GO" id="GO:0030145">
    <property type="term" value="F:manganese ion binding"/>
    <property type="evidence" value="ECO:0007669"/>
    <property type="project" value="InterPro"/>
</dbReference>
<dbReference type="GO" id="GO:0033389">
    <property type="term" value="P:putrescine biosynthetic process from arginine, via agmatine"/>
    <property type="evidence" value="ECO:0007669"/>
    <property type="project" value="TreeGrafter"/>
</dbReference>
<dbReference type="GO" id="GO:0008295">
    <property type="term" value="P:spermidine biosynthetic process"/>
    <property type="evidence" value="ECO:0007669"/>
    <property type="project" value="UniProtKB-UniRule"/>
</dbReference>
<dbReference type="CDD" id="cd11592">
    <property type="entry name" value="Agmatinase_PAH"/>
    <property type="match status" value="1"/>
</dbReference>
<dbReference type="FunFam" id="3.40.800.10:FF:000001">
    <property type="entry name" value="Agmatinase"/>
    <property type="match status" value="1"/>
</dbReference>
<dbReference type="Gene3D" id="3.40.800.10">
    <property type="entry name" value="Ureohydrolase domain"/>
    <property type="match status" value="1"/>
</dbReference>
<dbReference type="HAMAP" id="MF_01418">
    <property type="entry name" value="SpeB"/>
    <property type="match status" value="1"/>
</dbReference>
<dbReference type="InterPro" id="IPR023694">
    <property type="entry name" value="Agmatinase"/>
</dbReference>
<dbReference type="InterPro" id="IPR005925">
    <property type="entry name" value="Agmatinase-rel"/>
</dbReference>
<dbReference type="InterPro" id="IPR006035">
    <property type="entry name" value="Ureohydrolase"/>
</dbReference>
<dbReference type="InterPro" id="IPR023696">
    <property type="entry name" value="Ureohydrolase_dom_sf"/>
</dbReference>
<dbReference type="InterPro" id="IPR020855">
    <property type="entry name" value="Ureohydrolase_Mn_BS"/>
</dbReference>
<dbReference type="NCBIfam" id="TIGR01230">
    <property type="entry name" value="agmatinase"/>
    <property type="match status" value="1"/>
</dbReference>
<dbReference type="NCBIfam" id="NF002564">
    <property type="entry name" value="PRK02190.1"/>
    <property type="match status" value="1"/>
</dbReference>
<dbReference type="PANTHER" id="PTHR11358">
    <property type="entry name" value="ARGINASE/AGMATINASE"/>
    <property type="match status" value="1"/>
</dbReference>
<dbReference type="PANTHER" id="PTHR11358:SF26">
    <property type="entry name" value="GUANIDINO ACID HYDROLASE, MITOCHONDRIAL"/>
    <property type="match status" value="1"/>
</dbReference>
<dbReference type="Pfam" id="PF00491">
    <property type="entry name" value="Arginase"/>
    <property type="match status" value="1"/>
</dbReference>
<dbReference type="PIRSF" id="PIRSF036979">
    <property type="entry name" value="Arginase"/>
    <property type="match status" value="1"/>
</dbReference>
<dbReference type="SUPFAM" id="SSF52768">
    <property type="entry name" value="Arginase/deacetylase"/>
    <property type="match status" value="1"/>
</dbReference>
<dbReference type="PROSITE" id="PS01053">
    <property type="entry name" value="ARGINASE_1"/>
    <property type="match status" value="1"/>
</dbReference>
<dbReference type="PROSITE" id="PS51409">
    <property type="entry name" value="ARGINASE_2"/>
    <property type="match status" value="1"/>
</dbReference>
<proteinExistence type="inferred from homology"/>
<keyword id="KW-0378">Hydrolase</keyword>
<keyword id="KW-0464">Manganese</keyword>
<keyword id="KW-0479">Metal-binding</keyword>
<keyword id="KW-0620">Polyamine biosynthesis</keyword>
<keyword id="KW-0661">Putrescine biosynthesis</keyword>
<keyword id="KW-1185">Reference proteome</keyword>
<keyword id="KW-0745">Spermidine biosynthesis</keyword>
<evidence type="ECO:0000255" key="1">
    <source>
        <dbReference type="HAMAP-Rule" id="MF_01418"/>
    </source>
</evidence>
<sequence>MSTLGHQYDNSLVSNAFGFLRLPMNFQPYDSDADWVITGVPFDMATSGRAGGRHGPAAIRQVSTNLAWEHNRFPWNFDMRERLNVVDCGDLVYAFGDAREMSEKLQAHAEKLLAAGKRMLSFGGDHFVTLPLLRAHAKHFGKMALVHFDAHTDTYANGCEFDHGTMFYTAPKEGLIDPNHSVQIGIRTEFDKDNGFTVLDACQVNDRSVDDVIAQVKQIVGDMPVYLTFDIDCLDPAFAPGTGTPVIGGLTSDRAIKLVRGLKDLNIVGMDVVEVAPAYDQSEITALAAATLALEMLYIQAAKKGE</sequence>
<comment type="function">
    <text evidence="1">Catalyzes the formation of putrescine from agmatine.</text>
</comment>
<comment type="catalytic activity">
    <reaction evidence="1">
        <text>agmatine + H2O = urea + putrescine</text>
        <dbReference type="Rhea" id="RHEA:13929"/>
        <dbReference type="ChEBI" id="CHEBI:15377"/>
        <dbReference type="ChEBI" id="CHEBI:16199"/>
        <dbReference type="ChEBI" id="CHEBI:58145"/>
        <dbReference type="ChEBI" id="CHEBI:326268"/>
        <dbReference type="EC" id="3.5.3.11"/>
    </reaction>
</comment>
<comment type="cofactor">
    <cofactor evidence="1">
        <name>Mn(2+)</name>
        <dbReference type="ChEBI" id="CHEBI:29035"/>
    </cofactor>
</comment>
<comment type="pathway">
    <text evidence="1">Amine and polyamine biosynthesis; putrescine biosynthesis via agmatine pathway; putrescine from agmatine: step 1/1.</text>
</comment>
<comment type="similarity">
    <text evidence="1">Belongs to the arginase family. Agmatinase subfamily.</text>
</comment>
<name>SPEB_ECO57</name>
<gene>
    <name evidence="1" type="primary">speB</name>
    <name type="ordered locus">Z4281</name>
    <name type="ordered locus">ECs3812</name>
</gene>
<organism>
    <name type="scientific">Escherichia coli O157:H7</name>
    <dbReference type="NCBI Taxonomy" id="83334"/>
    <lineage>
        <taxon>Bacteria</taxon>
        <taxon>Pseudomonadati</taxon>
        <taxon>Pseudomonadota</taxon>
        <taxon>Gammaproteobacteria</taxon>
        <taxon>Enterobacterales</taxon>
        <taxon>Enterobacteriaceae</taxon>
        <taxon>Escherichia</taxon>
    </lineage>
</organism>